<gene>
    <name evidence="1" type="primary">apt</name>
    <name type="ordered locus">Rleg2_2775</name>
</gene>
<dbReference type="EC" id="2.4.2.7" evidence="1"/>
<dbReference type="EMBL" id="CP001191">
    <property type="protein sequence ID" value="ACI56045.1"/>
    <property type="molecule type" value="Genomic_DNA"/>
</dbReference>
<dbReference type="RefSeq" id="WP_003581166.1">
    <property type="nucleotide sequence ID" value="NC_011369.1"/>
</dbReference>
<dbReference type="SMR" id="B5ZY62"/>
<dbReference type="STRING" id="395492.Rleg2_2775"/>
<dbReference type="KEGG" id="rlt:Rleg2_2775"/>
<dbReference type="eggNOG" id="COG0503">
    <property type="taxonomic scope" value="Bacteria"/>
</dbReference>
<dbReference type="HOGENOM" id="CLU_063339_3_0_5"/>
<dbReference type="UniPathway" id="UPA00588">
    <property type="reaction ID" value="UER00646"/>
</dbReference>
<dbReference type="Proteomes" id="UP000008330">
    <property type="component" value="Chromosome"/>
</dbReference>
<dbReference type="GO" id="GO:0005737">
    <property type="term" value="C:cytoplasm"/>
    <property type="evidence" value="ECO:0007669"/>
    <property type="project" value="UniProtKB-SubCell"/>
</dbReference>
<dbReference type="GO" id="GO:0002055">
    <property type="term" value="F:adenine binding"/>
    <property type="evidence" value="ECO:0007669"/>
    <property type="project" value="TreeGrafter"/>
</dbReference>
<dbReference type="GO" id="GO:0003999">
    <property type="term" value="F:adenine phosphoribosyltransferase activity"/>
    <property type="evidence" value="ECO:0007669"/>
    <property type="project" value="UniProtKB-UniRule"/>
</dbReference>
<dbReference type="GO" id="GO:0016208">
    <property type="term" value="F:AMP binding"/>
    <property type="evidence" value="ECO:0007669"/>
    <property type="project" value="TreeGrafter"/>
</dbReference>
<dbReference type="GO" id="GO:0006168">
    <property type="term" value="P:adenine salvage"/>
    <property type="evidence" value="ECO:0007669"/>
    <property type="project" value="InterPro"/>
</dbReference>
<dbReference type="GO" id="GO:0044209">
    <property type="term" value="P:AMP salvage"/>
    <property type="evidence" value="ECO:0007669"/>
    <property type="project" value="UniProtKB-UniRule"/>
</dbReference>
<dbReference type="GO" id="GO:0006166">
    <property type="term" value="P:purine ribonucleoside salvage"/>
    <property type="evidence" value="ECO:0007669"/>
    <property type="project" value="UniProtKB-KW"/>
</dbReference>
<dbReference type="CDD" id="cd06223">
    <property type="entry name" value="PRTases_typeI"/>
    <property type="match status" value="1"/>
</dbReference>
<dbReference type="FunFam" id="3.40.50.2020:FF:000021">
    <property type="entry name" value="Adenine phosphoribosyltransferase"/>
    <property type="match status" value="1"/>
</dbReference>
<dbReference type="Gene3D" id="3.40.50.2020">
    <property type="match status" value="1"/>
</dbReference>
<dbReference type="HAMAP" id="MF_00004">
    <property type="entry name" value="Aden_phosphoribosyltr"/>
    <property type="match status" value="1"/>
</dbReference>
<dbReference type="InterPro" id="IPR005764">
    <property type="entry name" value="Ade_phspho_trans"/>
</dbReference>
<dbReference type="InterPro" id="IPR000836">
    <property type="entry name" value="PRibTrfase_dom"/>
</dbReference>
<dbReference type="InterPro" id="IPR029057">
    <property type="entry name" value="PRTase-like"/>
</dbReference>
<dbReference type="InterPro" id="IPR050054">
    <property type="entry name" value="UPRTase/APRTase"/>
</dbReference>
<dbReference type="NCBIfam" id="TIGR01090">
    <property type="entry name" value="apt"/>
    <property type="match status" value="1"/>
</dbReference>
<dbReference type="NCBIfam" id="NF002634">
    <property type="entry name" value="PRK02304.1-3"/>
    <property type="match status" value="1"/>
</dbReference>
<dbReference type="NCBIfam" id="NF002636">
    <property type="entry name" value="PRK02304.1-5"/>
    <property type="match status" value="1"/>
</dbReference>
<dbReference type="PANTHER" id="PTHR32315">
    <property type="entry name" value="ADENINE PHOSPHORIBOSYLTRANSFERASE"/>
    <property type="match status" value="1"/>
</dbReference>
<dbReference type="PANTHER" id="PTHR32315:SF3">
    <property type="entry name" value="ADENINE PHOSPHORIBOSYLTRANSFERASE"/>
    <property type="match status" value="1"/>
</dbReference>
<dbReference type="Pfam" id="PF00156">
    <property type="entry name" value="Pribosyltran"/>
    <property type="match status" value="1"/>
</dbReference>
<dbReference type="SUPFAM" id="SSF53271">
    <property type="entry name" value="PRTase-like"/>
    <property type="match status" value="1"/>
</dbReference>
<dbReference type="PROSITE" id="PS00103">
    <property type="entry name" value="PUR_PYR_PR_TRANSFER"/>
    <property type="match status" value="1"/>
</dbReference>
<organism>
    <name type="scientific">Rhizobium leguminosarum bv. trifolii (strain WSM2304)</name>
    <dbReference type="NCBI Taxonomy" id="395492"/>
    <lineage>
        <taxon>Bacteria</taxon>
        <taxon>Pseudomonadati</taxon>
        <taxon>Pseudomonadota</taxon>
        <taxon>Alphaproteobacteria</taxon>
        <taxon>Hyphomicrobiales</taxon>
        <taxon>Rhizobiaceae</taxon>
        <taxon>Rhizobium/Agrobacterium group</taxon>
        <taxon>Rhizobium</taxon>
    </lineage>
</organism>
<proteinExistence type="inferred from homology"/>
<accession>B5ZY62</accession>
<keyword id="KW-0963">Cytoplasm</keyword>
<keyword id="KW-0328">Glycosyltransferase</keyword>
<keyword id="KW-0660">Purine salvage</keyword>
<keyword id="KW-1185">Reference proteome</keyword>
<keyword id="KW-0808">Transferase</keyword>
<feature type="chain" id="PRO_1000088995" description="Adenine phosphoribosyltransferase">
    <location>
        <begin position="1"/>
        <end position="181"/>
    </location>
</feature>
<name>APT_RHILW</name>
<evidence type="ECO:0000255" key="1">
    <source>
        <dbReference type="HAMAP-Rule" id="MF_00004"/>
    </source>
</evidence>
<protein>
    <recommendedName>
        <fullName evidence="1">Adenine phosphoribosyltransferase</fullName>
        <shortName evidence="1">APRT</shortName>
        <ecNumber evidence="1">2.4.2.7</ecNumber>
    </recommendedName>
</protein>
<sequence>MDKNTTSELAASIRSIPDYPKPGIIFRDITTLLGNPRAFRRAVDELVQPYAGTKIDKIAGMEARGFILGGAVAHQLSSGFVPIRKKGKLPHETVRIAYSLEYGVDEMEMHRDAVQPGEKVILVDDLIATGGTAVGATKLLRQIGAEVVGACFVIDLPDLGGRKKLEELGVVVHTLVEFSGH</sequence>
<reference key="1">
    <citation type="journal article" date="2010" name="Stand. Genomic Sci.">
        <title>Complete genome sequence of Rhizobium leguminosarum bv trifolii strain WSM2304, an effective microsymbiont of the South American clover Trifolium polymorphum.</title>
        <authorList>
            <person name="Reeve W."/>
            <person name="O'Hara G."/>
            <person name="Chain P."/>
            <person name="Ardley J."/>
            <person name="Brau L."/>
            <person name="Nandesena K."/>
            <person name="Tiwari R."/>
            <person name="Malfatti S."/>
            <person name="Kiss H."/>
            <person name="Lapidus A."/>
            <person name="Copeland A."/>
            <person name="Nolan M."/>
            <person name="Land M."/>
            <person name="Ivanova N."/>
            <person name="Mavromatis K."/>
            <person name="Markowitz V."/>
            <person name="Kyrpides N."/>
            <person name="Melino V."/>
            <person name="Denton M."/>
            <person name="Yates R."/>
            <person name="Howieson J."/>
        </authorList>
    </citation>
    <scope>NUCLEOTIDE SEQUENCE [LARGE SCALE GENOMIC DNA]</scope>
    <source>
        <strain>WSM2304</strain>
    </source>
</reference>
<comment type="function">
    <text evidence="1">Catalyzes a salvage reaction resulting in the formation of AMP, that is energically less costly than de novo synthesis.</text>
</comment>
<comment type="catalytic activity">
    <reaction evidence="1">
        <text>AMP + diphosphate = 5-phospho-alpha-D-ribose 1-diphosphate + adenine</text>
        <dbReference type="Rhea" id="RHEA:16609"/>
        <dbReference type="ChEBI" id="CHEBI:16708"/>
        <dbReference type="ChEBI" id="CHEBI:33019"/>
        <dbReference type="ChEBI" id="CHEBI:58017"/>
        <dbReference type="ChEBI" id="CHEBI:456215"/>
        <dbReference type="EC" id="2.4.2.7"/>
    </reaction>
</comment>
<comment type="pathway">
    <text evidence="1">Purine metabolism; AMP biosynthesis via salvage pathway; AMP from adenine: step 1/1.</text>
</comment>
<comment type="subunit">
    <text evidence="1">Homodimer.</text>
</comment>
<comment type="subcellular location">
    <subcellularLocation>
        <location evidence="1">Cytoplasm</location>
    </subcellularLocation>
</comment>
<comment type="similarity">
    <text evidence="1">Belongs to the purine/pyrimidine phosphoribosyltransferase family.</text>
</comment>